<evidence type="ECO:0000255" key="1">
    <source>
        <dbReference type="HAMAP-Rule" id="MF_00151"/>
    </source>
</evidence>
<sequence length="166" mass="18272">MRRAVCPGSFDPIHNGHLEVIARAAGLFDEVIVAISTNYAKKYRFSLDERLEMARETLASLKGIVVEPVGEGLLAEYCRQRGVSAIVKGLRSSSDFDYELPMATMNRQLSGVETVFLPAEAHYIHLSSTLIKEVAGLGGNVSEYVPRSVLRRLLAGEPSANQQPRR</sequence>
<reference key="1">
    <citation type="submission" date="2009-01" db="EMBL/GenBank/DDBJ databases">
        <title>Complete sequence of chromosome of Arthrobacter chlorophenolicus A6.</title>
        <authorList>
            <consortium name="US DOE Joint Genome Institute"/>
            <person name="Lucas S."/>
            <person name="Copeland A."/>
            <person name="Lapidus A."/>
            <person name="Glavina del Rio T."/>
            <person name="Tice H."/>
            <person name="Bruce D."/>
            <person name="Goodwin L."/>
            <person name="Pitluck S."/>
            <person name="Goltsman E."/>
            <person name="Clum A."/>
            <person name="Larimer F."/>
            <person name="Land M."/>
            <person name="Hauser L."/>
            <person name="Kyrpides N."/>
            <person name="Mikhailova N."/>
            <person name="Jansson J."/>
            <person name="Richardson P."/>
        </authorList>
    </citation>
    <scope>NUCLEOTIDE SEQUENCE [LARGE SCALE GENOMIC DNA]</scope>
    <source>
        <strain>ATCC 700700 / DSM 12829 / CIP 107037 / JCM 12360 / KCTC 9906 / NCIMB 13794 / A6</strain>
    </source>
</reference>
<feature type="chain" id="PRO_1000123259" description="Phosphopantetheine adenylyltransferase">
    <location>
        <begin position="1"/>
        <end position="166"/>
    </location>
</feature>
<feature type="binding site" evidence="1">
    <location>
        <begin position="9"/>
        <end position="10"/>
    </location>
    <ligand>
        <name>ATP</name>
        <dbReference type="ChEBI" id="CHEBI:30616"/>
    </ligand>
</feature>
<feature type="binding site" evidence="1">
    <location>
        <position position="9"/>
    </location>
    <ligand>
        <name>substrate</name>
    </ligand>
</feature>
<feature type="binding site" evidence="1">
    <location>
        <position position="17"/>
    </location>
    <ligand>
        <name>ATP</name>
        <dbReference type="ChEBI" id="CHEBI:30616"/>
    </ligand>
</feature>
<feature type="binding site" evidence="1">
    <location>
        <position position="41"/>
    </location>
    <ligand>
        <name>substrate</name>
    </ligand>
</feature>
<feature type="binding site" evidence="1">
    <location>
        <position position="74"/>
    </location>
    <ligand>
        <name>substrate</name>
    </ligand>
</feature>
<feature type="binding site" evidence="1">
    <location>
        <position position="88"/>
    </location>
    <ligand>
        <name>substrate</name>
    </ligand>
</feature>
<feature type="binding site" evidence="1">
    <location>
        <begin position="89"/>
        <end position="91"/>
    </location>
    <ligand>
        <name>ATP</name>
        <dbReference type="ChEBI" id="CHEBI:30616"/>
    </ligand>
</feature>
<feature type="binding site" evidence="1">
    <location>
        <position position="99"/>
    </location>
    <ligand>
        <name>ATP</name>
        <dbReference type="ChEBI" id="CHEBI:30616"/>
    </ligand>
</feature>
<feature type="binding site" evidence="1">
    <location>
        <begin position="123"/>
        <end position="129"/>
    </location>
    <ligand>
        <name>ATP</name>
        <dbReference type="ChEBI" id="CHEBI:30616"/>
    </ligand>
</feature>
<feature type="site" description="Transition state stabilizer" evidence="1">
    <location>
        <position position="17"/>
    </location>
</feature>
<organism>
    <name type="scientific">Pseudarthrobacter chlorophenolicus (strain ATCC 700700 / DSM 12829 / CIP 107037 / JCM 12360 / KCTC 9906 / NCIMB 13794 / A6)</name>
    <name type="common">Arthrobacter chlorophenolicus</name>
    <dbReference type="NCBI Taxonomy" id="452863"/>
    <lineage>
        <taxon>Bacteria</taxon>
        <taxon>Bacillati</taxon>
        <taxon>Actinomycetota</taxon>
        <taxon>Actinomycetes</taxon>
        <taxon>Micrococcales</taxon>
        <taxon>Micrococcaceae</taxon>
        <taxon>Pseudarthrobacter</taxon>
    </lineage>
</organism>
<gene>
    <name evidence="1" type="primary">coaD</name>
    <name type="ordered locus">Achl_2243</name>
</gene>
<name>COAD_PSECP</name>
<proteinExistence type="inferred from homology"/>
<keyword id="KW-0067">ATP-binding</keyword>
<keyword id="KW-0173">Coenzyme A biosynthesis</keyword>
<keyword id="KW-0963">Cytoplasm</keyword>
<keyword id="KW-0460">Magnesium</keyword>
<keyword id="KW-0547">Nucleotide-binding</keyword>
<keyword id="KW-0548">Nucleotidyltransferase</keyword>
<keyword id="KW-0808">Transferase</keyword>
<dbReference type="EC" id="2.7.7.3" evidence="1"/>
<dbReference type="EMBL" id="CP001341">
    <property type="protein sequence ID" value="ACL40208.1"/>
    <property type="molecule type" value="Genomic_DNA"/>
</dbReference>
<dbReference type="RefSeq" id="WP_015937423.1">
    <property type="nucleotide sequence ID" value="NC_011886.1"/>
</dbReference>
<dbReference type="SMR" id="B8HAB6"/>
<dbReference type="STRING" id="452863.Achl_2243"/>
<dbReference type="KEGG" id="ach:Achl_2243"/>
<dbReference type="eggNOG" id="COG0669">
    <property type="taxonomic scope" value="Bacteria"/>
</dbReference>
<dbReference type="HOGENOM" id="CLU_100149_1_0_11"/>
<dbReference type="OrthoDB" id="9806661at2"/>
<dbReference type="UniPathway" id="UPA00241">
    <property type="reaction ID" value="UER00355"/>
</dbReference>
<dbReference type="Proteomes" id="UP000002505">
    <property type="component" value="Chromosome"/>
</dbReference>
<dbReference type="GO" id="GO:0005737">
    <property type="term" value="C:cytoplasm"/>
    <property type="evidence" value="ECO:0007669"/>
    <property type="project" value="UniProtKB-SubCell"/>
</dbReference>
<dbReference type="GO" id="GO:0005524">
    <property type="term" value="F:ATP binding"/>
    <property type="evidence" value="ECO:0007669"/>
    <property type="project" value="UniProtKB-KW"/>
</dbReference>
<dbReference type="GO" id="GO:0004595">
    <property type="term" value="F:pantetheine-phosphate adenylyltransferase activity"/>
    <property type="evidence" value="ECO:0007669"/>
    <property type="project" value="UniProtKB-UniRule"/>
</dbReference>
<dbReference type="GO" id="GO:0015937">
    <property type="term" value="P:coenzyme A biosynthetic process"/>
    <property type="evidence" value="ECO:0007669"/>
    <property type="project" value="UniProtKB-UniRule"/>
</dbReference>
<dbReference type="CDD" id="cd02163">
    <property type="entry name" value="PPAT"/>
    <property type="match status" value="1"/>
</dbReference>
<dbReference type="Gene3D" id="3.40.50.620">
    <property type="entry name" value="HUPs"/>
    <property type="match status" value="1"/>
</dbReference>
<dbReference type="HAMAP" id="MF_00151">
    <property type="entry name" value="PPAT_bact"/>
    <property type="match status" value="1"/>
</dbReference>
<dbReference type="InterPro" id="IPR004821">
    <property type="entry name" value="Cyt_trans-like"/>
</dbReference>
<dbReference type="InterPro" id="IPR001980">
    <property type="entry name" value="PPAT"/>
</dbReference>
<dbReference type="InterPro" id="IPR014729">
    <property type="entry name" value="Rossmann-like_a/b/a_fold"/>
</dbReference>
<dbReference type="NCBIfam" id="TIGR01510">
    <property type="entry name" value="coaD_prev_kdtB"/>
    <property type="match status" value="1"/>
</dbReference>
<dbReference type="NCBIfam" id="TIGR00125">
    <property type="entry name" value="cyt_tran_rel"/>
    <property type="match status" value="1"/>
</dbReference>
<dbReference type="PANTHER" id="PTHR21342">
    <property type="entry name" value="PHOSPHOPANTETHEINE ADENYLYLTRANSFERASE"/>
    <property type="match status" value="1"/>
</dbReference>
<dbReference type="PANTHER" id="PTHR21342:SF1">
    <property type="entry name" value="PHOSPHOPANTETHEINE ADENYLYLTRANSFERASE"/>
    <property type="match status" value="1"/>
</dbReference>
<dbReference type="Pfam" id="PF01467">
    <property type="entry name" value="CTP_transf_like"/>
    <property type="match status" value="1"/>
</dbReference>
<dbReference type="PRINTS" id="PR01020">
    <property type="entry name" value="LPSBIOSNTHSS"/>
</dbReference>
<dbReference type="SUPFAM" id="SSF52374">
    <property type="entry name" value="Nucleotidylyl transferase"/>
    <property type="match status" value="1"/>
</dbReference>
<protein>
    <recommendedName>
        <fullName evidence="1">Phosphopantetheine adenylyltransferase</fullName>
        <ecNumber evidence="1">2.7.7.3</ecNumber>
    </recommendedName>
    <alternativeName>
        <fullName evidence="1">Dephospho-CoA pyrophosphorylase</fullName>
    </alternativeName>
    <alternativeName>
        <fullName evidence="1">Pantetheine-phosphate adenylyltransferase</fullName>
        <shortName evidence="1">PPAT</shortName>
    </alternativeName>
</protein>
<comment type="function">
    <text evidence="1">Reversibly transfers an adenylyl group from ATP to 4'-phosphopantetheine, yielding dephospho-CoA (dPCoA) and pyrophosphate.</text>
</comment>
<comment type="catalytic activity">
    <reaction evidence="1">
        <text>(R)-4'-phosphopantetheine + ATP + H(+) = 3'-dephospho-CoA + diphosphate</text>
        <dbReference type="Rhea" id="RHEA:19801"/>
        <dbReference type="ChEBI" id="CHEBI:15378"/>
        <dbReference type="ChEBI" id="CHEBI:30616"/>
        <dbReference type="ChEBI" id="CHEBI:33019"/>
        <dbReference type="ChEBI" id="CHEBI:57328"/>
        <dbReference type="ChEBI" id="CHEBI:61723"/>
        <dbReference type="EC" id="2.7.7.3"/>
    </reaction>
</comment>
<comment type="cofactor">
    <cofactor evidence="1">
        <name>Mg(2+)</name>
        <dbReference type="ChEBI" id="CHEBI:18420"/>
    </cofactor>
</comment>
<comment type="pathway">
    <text evidence="1">Cofactor biosynthesis; coenzyme A biosynthesis; CoA from (R)-pantothenate: step 4/5.</text>
</comment>
<comment type="subunit">
    <text evidence="1">Homohexamer.</text>
</comment>
<comment type="subcellular location">
    <subcellularLocation>
        <location evidence="1">Cytoplasm</location>
    </subcellularLocation>
</comment>
<comment type="similarity">
    <text evidence="1">Belongs to the bacterial CoaD family.</text>
</comment>
<accession>B8HAB6</accession>